<comment type="function">
    <text evidence="1">Component of the A-type ATP synthase that produces ATP from ADP in the presence of a proton gradient across the membrane. The B chain is a regulatory subunit.</text>
</comment>
<comment type="subunit">
    <text evidence="1">Has multiple subunits with at least A(3), B(3), C, D, E, F, H, I and proteolipid K(x).</text>
</comment>
<comment type="subcellular location">
    <subcellularLocation>
        <location evidence="1">Cell membrane</location>
        <topology evidence="1">Peripheral membrane protein</topology>
    </subcellularLocation>
</comment>
<comment type="similarity">
    <text evidence="1">Belongs to the ATPase alpha/beta chains family.</text>
</comment>
<comment type="sequence caution" evidence="2">
    <conflict type="erroneous initiation">
        <sequence resource="EMBL-CDS" id="AAY80862"/>
    </conflict>
</comment>
<organism>
    <name type="scientific">Sulfolobus acidocaldarius (strain ATCC 33909 / DSM 639 / JCM 8929 / NBRC 15157 / NCIMB 11770)</name>
    <dbReference type="NCBI Taxonomy" id="330779"/>
    <lineage>
        <taxon>Archaea</taxon>
        <taxon>Thermoproteota</taxon>
        <taxon>Thermoprotei</taxon>
        <taxon>Sulfolobales</taxon>
        <taxon>Sulfolobaceae</taxon>
        <taxon>Sulfolobus</taxon>
    </lineage>
</organism>
<proteinExistence type="inferred from homology"/>
<accession>Q4J8L8</accession>
<evidence type="ECO:0000255" key="1">
    <source>
        <dbReference type="HAMAP-Rule" id="MF_00310"/>
    </source>
</evidence>
<evidence type="ECO:0000305" key="2"/>
<keyword id="KW-0066">ATP synthesis</keyword>
<keyword id="KW-1003">Cell membrane</keyword>
<keyword id="KW-0375">Hydrogen ion transport</keyword>
<keyword id="KW-0406">Ion transport</keyword>
<keyword id="KW-0472">Membrane</keyword>
<keyword id="KW-1185">Reference proteome</keyword>
<keyword id="KW-0813">Transport</keyword>
<dbReference type="EMBL" id="CP000077">
    <property type="protein sequence ID" value="AAY80862.1"/>
    <property type="status" value="ALT_INIT"/>
    <property type="molecule type" value="Genomic_DNA"/>
</dbReference>
<dbReference type="SMR" id="Q4J8L8"/>
<dbReference type="STRING" id="330779.Saci_1549"/>
<dbReference type="KEGG" id="sai:Saci_1549"/>
<dbReference type="PATRIC" id="fig|330779.12.peg.1489"/>
<dbReference type="eggNOG" id="arCOG00865">
    <property type="taxonomic scope" value="Archaea"/>
</dbReference>
<dbReference type="HOGENOM" id="CLU_022916_0_0_2"/>
<dbReference type="Proteomes" id="UP000001018">
    <property type="component" value="Chromosome"/>
</dbReference>
<dbReference type="GO" id="GO:0005886">
    <property type="term" value="C:plasma membrane"/>
    <property type="evidence" value="ECO:0007669"/>
    <property type="project" value="UniProtKB-SubCell"/>
</dbReference>
<dbReference type="GO" id="GO:0005524">
    <property type="term" value="F:ATP binding"/>
    <property type="evidence" value="ECO:0007669"/>
    <property type="project" value="UniProtKB-UniRule"/>
</dbReference>
<dbReference type="GO" id="GO:0046933">
    <property type="term" value="F:proton-transporting ATP synthase activity, rotational mechanism"/>
    <property type="evidence" value="ECO:0007669"/>
    <property type="project" value="UniProtKB-UniRule"/>
</dbReference>
<dbReference type="GO" id="GO:0046961">
    <property type="term" value="F:proton-transporting ATPase activity, rotational mechanism"/>
    <property type="evidence" value="ECO:0007669"/>
    <property type="project" value="TreeGrafter"/>
</dbReference>
<dbReference type="GO" id="GO:0042777">
    <property type="term" value="P:proton motive force-driven plasma membrane ATP synthesis"/>
    <property type="evidence" value="ECO:0007669"/>
    <property type="project" value="UniProtKB-UniRule"/>
</dbReference>
<dbReference type="CDD" id="cd18112">
    <property type="entry name" value="ATP-synt_V_A-type_beta_C"/>
    <property type="match status" value="1"/>
</dbReference>
<dbReference type="CDD" id="cd18118">
    <property type="entry name" value="ATP-synt_V_A-type_beta_N"/>
    <property type="match status" value="1"/>
</dbReference>
<dbReference type="CDD" id="cd01135">
    <property type="entry name" value="V_A-ATPase_B"/>
    <property type="match status" value="1"/>
</dbReference>
<dbReference type="Gene3D" id="3.40.50.12240">
    <property type="match status" value="1"/>
</dbReference>
<dbReference type="HAMAP" id="MF_00310">
    <property type="entry name" value="ATP_synth_B_arch"/>
    <property type="match status" value="1"/>
</dbReference>
<dbReference type="InterPro" id="IPR055190">
    <property type="entry name" value="ATP-synt_VA_C"/>
</dbReference>
<dbReference type="InterPro" id="IPR020003">
    <property type="entry name" value="ATPase_a/bsu_AS"/>
</dbReference>
<dbReference type="InterPro" id="IPR004100">
    <property type="entry name" value="ATPase_F1/V1/A1_a/bsu_N"/>
</dbReference>
<dbReference type="InterPro" id="IPR000194">
    <property type="entry name" value="ATPase_F1/V1/A1_a/bsu_nucl-bd"/>
</dbReference>
<dbReference type="InterPro" id="IPR027417">
    <property type="entry name" value="P-loop_NTPase"/>
</dbReference>
<dbReference type="InterPro" id="IPR022879">
    <property type="entry name" value="V-ATPase_su_B/beta"/>
</dbReference>
<dbReference type="NCBIfam" id="NF003235">
    <property type="entry name" value="PRK04196.1"/>
    <property type="match status" value="1"/>
</dbReference>
<dbReference type="PANTHER" id="PTHR43389">
    <property type="entry name" value="V-TYPE PROTON ATPASE SUBUNIT B"/>
    <property type="match status" value="1"/>
</dbReference>
<dbReference type="PANTHER" id="PTHR43389:SF4">
    <property type="entry name" value="V-TYPE PROTON ATPASE SUBUNIT B"/>
    <property type="match status" value="1"/>
</dbReference>
<dbReference type="Pfam" id="PF00006">
    <property type="entry name" value="ATP-synt_ab"/>
    <property type="match status" value="1"/>
</dbReference>
<dbReference type="Pfam" id="PF02874">
    <property type="entry name" value="ATP-synt_ab_N"/>
    <property type="match status" value="1"/>
</dbReference>
<dbReference type="Pfam" id="PF22919">
    <property type="entry name" value="ATP-synt_VA_C"/>
    <property type="match status" value="1"/>
</dbReference>
<dbReference type="PIRSF" id="PIRSF039114">
    <property type="entry name" value="V-ATPsynth_beta/V-ATPase_B"/>
    <property type="match status" value="1"/>
</dbReference>
<dbReference type="SUPFAM" id="SSF47917">
    <property type="entry name" value="C-terminal domain of alpha and beta subunits of F1 ATP synthase"/>
    <property type="match status" value="1"/>
</dbReference>
<dbReference type="SUPFAM" id="SSF52540">
    <property type="entry name" value="P-loop containing nucleoside triphosphate hydrolases"/>
    <property type="match status" value="1"/>
</dbReference>
<dbReference type="PROSITE" id="PS00152">
    <property type="entry name" value="ATPASE_ALPHA_BETA"/>
    <property type="match status" value="1"/>
</dbReference>
<protein>
    <recommendedName>
        <fullName evidence="1">A-type ATP synthase subunit B</fullName>
    </recommendedName>
</protein>
<feature type="chain" id="PRO_0000144666" description="A-type ATP synthase subunit B">
    <location>
        <begin position="1"/>
        <end position="466"/>
    </location>
</feature>
<sequence length="466" mass="51692">MSTLMNIREYNSISMIKGPLMAIEGVTDAAYNELIEVEMPDGSKRRGIVVDSQSGVAIVQVFEGTTGVSPTQSKVRFLGRGLEVKISEEMLGRIFTPLGEPLDNGPQVLSGEKRDINGSPLNPSVREYPEEFIQTGVSAIDGLTSLLRGQKLPIFSGSGLPANQLAAQIAKQATVRGEESNFAVVFAAIGIRYDEALFFRRFFEETGAINRVAMFVTLANDPPSLKILTPKTALTLAEYLAYEKDMHILAILIDMTNYCEALRELSASKEEVPGRGGYPGYMYTDLAVTYERAGKVRGKKGSITQMPILTMPNDDITHPIPDLTGYITEGQIVLDRSLFNKGIYPPINVLASLSRLMRDGIGEGKTRDDHKDLSNQLFAAYARAQDIRGLAAIIGEDSLSDVDRKYLLFAEQFERKFINQGINENRDIETTLDIGWEVISMLPESEISLIRTEYIKKYHPNYRVKK</sequence>
<gene>
    <name evidence="1" type="primary">atpB</name>
    <name type="ordered locus">Saci_1549</name>
</gene>
<name>AATB_SULAC</name>
<reference key="1">
    <citation type="journal article" date="2005" name="J. Bacteriol.">
        <title>The genome of Sulfolobus acidocaldarius, a model organism of the Crenarchaeota.</title>
        <authorList>
            <person name="Chen L."/>
            <person name="Bruegger K."/>
            <person name="Skovgaard M."/>
            <person name="Redder P."/>
            <person name="She Q."/>
            <person name="Torarinsson E."/>
            <person name="Greve B."/>
            <person name="Awayez M."/>
            <person name="Zibat A."/>
            <person name="Klenk H.-P."/>
            <person name="Garrett R.A."/>
        </authorList>
    </citation>
    <scope>NUCLEOTIDE SEQUENCE [LARGE SCALE GENOMIC DNA]</scope>
    <source>
        <strain>ATCC 33909 / DSM 639 / JCM 8929 / NBRC 15157 / NCIMB 11770</strain>
    </source>
</reference>